<sequence>MATCLDSLGPLLGGAANSTDAANYICNRFTDTSSAVDATYLLFSAYLVFAMQLGFAMLCAGSVRAKNSMNIMLTNVLDAAAGALFYYLFGFAFAFGTPSKGFIGKQFFGLKHMPQTGYDYDFFLFQWAFAIAAAGITSGSIAERTRFSAYLIYSAFLTGFVYPVVSHWFWSTDGWASAGRLTGPLLFKSGVIDFAGSGVVHLVGGIAGLWGAFIEGPRIGRFDAAGRTVAMKGHSASLVVLGTFLLWFGWFGFNPGSFTTISKIYGESGTIDGQWSAVGRTAVTTSLAGSVAALTTLYGKRWLTGHWNVTDVCNGLLGGFAAITAGCSVVDPWASVICGFVSAWVLIGCNKLSLILKFDDPLEATQLHAGCGAWGIIFTALFARREYVELIYGVPGRPYGLFMGGGGRLLAAHIVQILVIVGWVSATMGTLFYVLHRFGLLRVSPATEMEGMDPTCHGGFGYVDEDEGERRVRAKSAAETARVEPRKSPEQAAAGQFV</sequence>
<dbReference type="EMBL" id="AF289478">
    <property type="protein sequence ID" value="AAL05613.1"/>
    <property type="status" value="ALT_SEQ"/>
    <property type="molecule type" value="Genomic_DNA"/>
</dbReference>
<dbReference type="EMBL" id="AP004053">
    <property type="protein sequence ID" value="BAD21532.1"/>
    <property type="molecule type" value="Genomic_DNA"/>
</dbReference>
<dbReference type="EMBL" id="AP004059">
    <property type="protein sequence ID" value="BAD21572.1"/>
    <property type="molecule type" value="Genomic_DNA"/>
</dbReference>
<dbReference type="EMBL" id="AP008208">
    <property type="protein sequence ID" value="BAF09369.1"/>
    <property type="molecule type" value="Genomic_DNA"/>
</dbReference>
<dbReference type="EMBL" id="AP014958">
    <property type="protein sequence ID" value="BAS79817.1"/>
    <property type="molecule type" value="Genomic_DNA"/>
</dbReference>
<dbReference type="EMBL" id="CM000139">
    <property type="protein sequence ID" value="EAZ23845.1"/>
    <property type="molecule type" value="Genomic_DNA"/>
</dbReference>
<dbReference type="RefSeq" id="XP_015624850.1">
    <property type="nucleotide sequence ID" value="XM_015769364.1"/>
</dbReference>
<dbReference type="SMR" id="Q6K9G3"/>
<dbReference type="FunCoup" id="Q6K9G3">
    <property type="interactions" value="211"/>
</dbReference>
<dbReference type="STRING" id="39947.Q6K9G3"/>
<dbReference type="PaxDb" id="39947-Q6K9G3"/>
<dbReference type="EnsemblPlants" id="Os02t0620500-01">
    <property type="protein sequence ID" value="Os02t0620500-01"/>
    <property type="gene ID" value="Os02g0620500"/>
</dbReference>
<dbReference type="Gramene" id="Os02t0620500-01">
    <property type="protein sequence ID" value="Os02t0620500-01"/>
    <property type="gene ID" value="Os02g0620500"/>
</dbReference>
<dbReference type="KEGG" id="dosa:Os02g0620500"/>
<dbReference type="eggNOG" id="KOG0682">
    <property type="taxonomic scope" value="Eukaryota"/>
</dbReference>
<dbReference type="HOGENOM" id="CLU_000445_33_1_1"/>
<dbReference type="InParanoid" id="Q6K9G3"/>
<dbReference type="OMA" id="VVWVLMD"/>
<dbReference type="OrthoDB" id="534912at2759"/>
<dbReference type="Proteomes" id="UP000000763">
    <property type="component" value="Chromosome 2"/>
</dbReference>
<dbReference type="Proteomes" id="UP000007752">
    <property type="component" value="Chromosome 2"/>
</dbReference>
<dbReference type="Proteomes" id="UP000059680">
    <property type="component" value="Chromosome 2"/>
</dbReference>
<dbReference type="GO" id="GO:0005886">
    <property type="term" value="C:plasma membrane"/>
    <property type="evidence" value="ECO:0000318"/>
    <property type="project" value="GO_Central"/>
</dbReference>
<dbReference type="GO" id="GO:0008519">
    <property type="term" value="F:ammonium channel activity"/>
    <property type="evidence" value="ECO:0000318"/>
    <property type="project" value="GO_Central"/>
</dbReference>
<dbReference type="GO" id="GO:0097272">
    <property type="term" value="P:ammonium homeostasis"/>
    <property type="evidence" value="ECO:0000318"/>
    <property type="project" value="GO_Central"/>
</dbReference>
<dbReference type="GO" id="GO:0072488">
    <property type="term" value="P:ammonium transmembrane transport"/>
    <property type="evidence" value="ECO:0000318"/>
    <property type="project" value="GO_Central"/>
</dbReference>
<dbReference type="FunFam" id="1.10.3430.10:FF:000006">
    <property type="entry name" value="Ammonium transporter"/>
    <property type="match status" value="1"/>
</dbReference>
<dbReference type="Gene3D" id="1.10.3430.10">
    <property type="entry name" value="Ammonium transporter AmtB like domains"/>
    <property type="match status" value="1"/>
</dbReference>
<dbReference type="InterPro" id="IPR029020">
    <property type="entry name" value="Ammonium/urea_transptr"/>
</dbReference>
<dbReference type="InterPro" id="IPR001905">
    <property type="entry name" value="Ammonium_transpt"/>
</dbReference>
<dbReference type="InterPro" id="IPR018047">
    <property type="entry name" value="Ammonium_transpt_CS"/>
</dbReference>
<dbReference type="InterPro" id="IPR024041">
    <property type="entry name" value="NH4_transpt_AmtB-like_dom"/>
</dbReference>
<dbReference type="NCBIfam" id="TIGR00836">
    <property type="entry name" value="amt"/>
    <property type="match status" value="1"/>
</dbReference>
<dbReference type="PANTHER" id="PTHR11730">
    <property type="entry name" value="AMMONIUM TRANSPORTER"/>
    <property type="match status" value="1"/>
</dbReference>
<dbReference type="PANTHER" id="PTHR11730:SF121">
    <property type="entry name" value="AMMONIUM TRANSPORTER 1 MEMBER 1"/>
    <property type="match status" value="1"/>
</dbReference>
<dbReference type="Pfam" id="PF00909">
    <property type="entry name" value="Ammonium_transp"/>
    <property type="match status" value="1"/>
</dbReference>
<dbReference type="SUPFAM" id="SSF111352">
    <property type="entry name" value="Ammonium transporter"/>
    <property type="match status" value="1"/>
</dbReference>
<dbReference type="PROSITE" id="PS01219">
    <property type="entry name" value="AMMONIUM_TRANSP"/>
    <property type="match status" value="1"/>
</dbReference>
<proteinExistence type="evidence at transcript level"/>
<organism>
    <name type="scientific">Oryza sativa subsp. japonica</name>
    <name type="common">Rice</name>
    <dbReference type="NCBI Taxonomy" id="39947"/>
    <lineage>
        <taxon>Eukaryota</taxon>
        <taxon>Viridiplantae</taxon>
        <taxon>Streptophyta</taxon>
        <taxon>Embryophyta</taxon>
        <taxon>Tracheophyta</taxon>
        <taxon>Spermatophyta</taxon>
        <taxon>Magnoliopsida</taxon>
        <taxon>Liliopsida</taxon>
        <taxon>Poales</taxon>
        <taxon>Poaceae</taxon>
        <taxon>BOP clade</taxon>
        <taxon>Oryzoideae</taxon>
        <taxon>Oryzeae</taxon>
        <taxon>Oryzinae</taxon>
        <taxon>Oryza</taxon>
        <taxon>Oryza sativa</taxon>
    </lineage>
</organism>
<protein>
    <recommendedName>
        <fullName>Ammonium transporter 1 member 3</fullName>
        <shortName>OsAMT1;3</shortName>
    </recommendedName>
</protein>
<feature type="chain" id="PRO_0000385646" description="Ammonium transporter 1 member 3">
    <location>
        <begin position="1"/>
        <end position="498"/>
    </location>
</feature>
<feature type="transmembrane region" description="Helical" evidence="1">
    <location>
        <begin position="41"/>
        <end position="61"/>
    </location>
</feature>
<feature type="transmembrane region" description="Helical" evidence="1">
    <location>
        <begin position="76"/>
        <end position="96"/>
    </location>
</feature>
<feature type="transmembrane region" description="Helical" evidence="1">
    <location>
        <begin position="122"/>
        <end position="142"/>
    </location>
</feature>
<feature type="transmembrane region" description="Helical" evidence="1">
    <location>
        <begin position="150"/>
        <end position="170"/>
    </location>
</feature>
<feature type="transmembrane region" description="Helical" evidence="1">
    <location>
        <begin position="194"/>
        <end position="214"/>
    </location>
</feature>
<feature type="transmembrane region" description="Helical" evidence="1">
    <location>
        <begin position="238"/>
        <end position="258"/>
    </location>
</feature>
<feature type="transmembrane region" description="Helical" evidence="1">
    <location>
        <begin position="277"/>
        <end position="299"/>
    </location>
</feature>
<feature type="transmembrane region" description="Helical" evidence="1">
    <location>
        <begin position="307"/>
        <end position="327"/>
    </location>
</feature>
<feature type="transmembrane region" description="Helical" evidence="1">
    <location>
        <begin position="329"/>
        <end position="349"/>
    </location>
</feature>
<feature type="transmembrane region" description="Helical" evidence="1">
    <location>
        <begin position="362"/>
        <end position="382"/>
    </location>
</feature>
<feature type="transmembrane region" description="Helical" evidence="1">
    <location>
        <begin position="414"/>
        <end position="434"/>
    </location>
</feature>
<feature type="region of interest" description="Disordered" evidence="2">
    <location>
        <begin position="473"/>
        <end position="498"/>
    </location>
</feature>
<accession>Q6K9G3</accession>
<accession>A0A0N7KFP8</accession>
<accession>Q947N0</accession>
<gene>
    <name type="primary">AMT1-3</name>
    <name type="synonym">AMT1-2</name>
    <name type="ordered locus">Os02g0620500</name>
    <name type="ordered locus">LOC_Os02g40710</name>
    <name type="ORF">OJ1234_B11.1</name>
    <name type="ORF">OJ1372_D06.26</name>
    <name type="ORF">OsJ_07561</name>
</gene>
<evidence type="ECO:0000255" key="1"/>
<evidence type="ECO:0000256" key="2">
    <source>
        <dbReference type="SAM" id="MobiDB-lite"/>
    </source>
</evidence>
<evidence type="ECO:0000269" key="3">
    <source>
    </source>
</evidence>
<evidence type="ECO:0000269" key="4">
    <source>
    </source>
</evidence>
<evidence type="ECO:0000269" key="5">
    <source>
    </source>
</evidence>
<evidence type="ECO:0000305" key="6"/>
<reference key="1">
    <citation type="submission" date="2000-07" db="EMBL/GenBank/DDBJ databases">
        <title>Cloning and characterization of three ammonium transporter genes from rice.</title>
        <authorList>
            <person name="Hoque M.S."/>
            <person name="Masle J."/>
            <person name="Udvardi M.K."/>
            <person name="Upadhyaya N.M."/>
        </authorList>
    </citation>
    <scope>NUCLEOTIDE SEQUENCE [GENOMIC DNA]</scope>
</reference>
<reference key="2">
    <citation type="journal article" date="2005" name="Nature">
        <title>The map-based sequence of the rice genome.</title>
        <authorList>
            <consortium name="International rice genome sequencing project (IRGSP)"/>
        </authorList>
    </citation>
    <scope>NUCLEOTIDE SEQUENCE [LARGE SCALE GENOMIC DNA]</scope>
    <source>
        <strain>cv. Nipponbare</strain>
    </source>
</reference>
<reference key="3">
    <citation type="journal article" date="2008" name="Nucleic Acids Res.">
        <title>The rice annotation project database (RAP-DB): 2008 update.</title>
        <authorList>
            <consortium name="The rice annotation project (RAP)"/>
        </authorList>
    </citation>
    <scope>GENOME REANNOTATION</scope>
    <source>
        <strain>cv. Nipponbare</strain>
    </source>
</reference>
<reference key="4">
    <citation type="journal article" date="2013" name="Rice">
        <title>Improvement of the Oryza sativa Nipponbare reference genome using next generation sequence and optical map data.</title>
        <authorList>
            <person name="Kawahara Y."/>
            <person name="de la Bastide M."/>
            <person name="Hamilton J.P."/>
            <person name="Kanamori H."/>
            <person name="McCombie W.R."/>
            <person name="Ouyang S."/>
            <person name="Schwartz D.C."/>
            <person name="Tanaka T."/>
            <person name="Wu J."/>
            <person name="Zhou S."/>
            <person name="Childs K.L."/>
            <person name="Davidson R.M."/>
            <person name="Lin H."/>
            <person name="Quesada-Ocampo L."/>
            <person name="Vaillancourt B."/>
            <person name="Sakai H."/>
            <person name="Lee S.S."/>
            <person name="Kim J."/>
            <person name="Numa H."/>
            <person name="Itoh T."/>
            <person name="Buell C.R."/>
            <person name="Matsumoto T."/>
        </authorList>
    </citation>
    <scope>GENOME REANNOTATION</scope>
    <source>
        <strain>cv. Nipponbare</strain>
    </source>
</reference>
<reference key="5">
    <citation type="journal article" date="2005" name="PLoS Biol.">
        <title>The genomes of Oryza sativa: a history of duplications.</title>
        <authorList>
            <person name="Yu J."/>
            <person name="Wang J."/>
            <person name="Lin W."/>
            <person name="Li S."/>
            <person name="Li H."/>
            <person name="Zhou J."/>
            <person name="Ni P."/>
            <person name="Dong W."/>
            <person name="Hu S."/>
            <person name="Zeng C."/>
            <person name="Zhang J."/>
            <person name="Zhang Y."/>
            <person name="Li R."/>
            <person name="Xu Z."/>
            <person name="Li S."/>
            <person name="Li X."/>
            <person name="Zheng H."/>
            <person name="Cong L."/>
            <person name="Lin L."/>
            <person name="Yin J."/>
            <person name="Geng J."/>
            <person name="Li G."/>
            <person name="Shi J."/>
            <person name="Liu J."/>
            <person name="Lv H."/>
            <person name="Li J."/>
            <person name="Wang J."/>
            <person name="Deng Y."/>
            <person name="Ran L."/>
            <person name="Shi X."/>
            <person name="Wang X."/>
            <person name="Wu Q."/>
            <person name="Li C."/>
            <person name="Ren X."/>
            <person name="Wang J."/>
            <person name="Wang X."/>
            <person name="Li D."/>
            <person name="Liu D."/>
            <person name="Zhang X."/>
            <person name="Ji Z."/>
            <person name="Zhao W."/>
            <person name="Sun Y."/>
            <person name="Zhang Z."/>
            <person name="Bao J."/>
            <person name="Han Y."/>
            <person name="Dong L."/>
            <person name="Ji J."/>
            <person name="Chen P."/>
            <person name="Wu S."/>
            <person name="Liu J."/>
            <person name="Xiao Y."/>
            <person name="Bu D."/>
            <person name="Tan J."/>
            <person name="Yang L."/>
            <person name="Ye C."/>
            <person name="Zhang J."/>
            <person name="Xu J."/>
            <person name="Zhou Y."/>
            <person name="Yu Y."/>
            <person name="Zhang B."/>
            <person name="Zhuang S."/>
            <person name="Wei H."/>
            <person name="Liu B."/>
            <person name="Lei M."/>
            <person name="Yu H."/>
            <person name="Li Y."/>
            <person name="Xu H."/>
            <person name="Wei S."/>
            <person name="He X."/>
            <person name="Fang L."/>
            <person name="Zhang Z."/>
            <person name="Zhang Y."/>
            <person name="Huang X."/>
            <person name="Su Z."/>
            <person name="Tong W."/>
            <person name="Li J."/>
            <person name="Tong Z."/>
            <person name="Li S."/>
            <person name="Ye J."/>
            <person name="Wang L."/>
            <person name="Fang L."/>
            <person name="Lei T."/>
            <person name="Chen C.-S."/>
            <person name="Chen H.-C."/>
            <person name="Xu Z."/>
            <person name="Li H."/>
            <person name="Huang H."/>
            <person name="Zhang F."/>
            <person name="Xu H."/>
            <person name="Li N."/>
            <person name="Zhao C."/>
            <person name="Li S."/>
            <person name="Dong L."/>
            <person name="Huang Y."/>
            <person name="Li L."/>
            <person name="Xi Y."/>
            <person name="Qi Q."/>
            <person name="Li W."/>
            <person name="Zhang B."/>
            <person name="Hu W."/>
            <person name="Zhang Y."/>
            <person name="Tian X."/>
            <person name="Jiao Y."/>
            <person name="Liang X."/>
            <person name="Jin J."/>
            <person name="Gao L."/>
            <person name="Zheng W."/>
            <person name="Hao B."/>
            <person name="Liu S.-M."/>
            <person name="Wang W."/>
            <person name="Yuan L."/>
            <person name="Cao M."/>
            <person name="McDermott J."/>
            <person name="Samudrala R."/>
            <person name="Wang J."/>
            <person name="Wong G.K.-S."/>
            <person name="Yang H."/>
        </authorList>
    </citation>
    <scope>NUCLEOTIDE SEQUENCE [LARGE SCALE GENOMIC DNA]</scope>
    <source>
        <strain>cv. Nipponbare</strain>
    </source>
</reference>
<reference key="6">
    <citation type="journal article" date="2003" name="Plant Cell Physiol.">
        <title>Constitutive expression of a novel-type ammonium transporter OsAMT2 in rice plants.</title>
        <authorList>
            <person name="Suenaga A."/>
            <person name="Moriya K."/>
            <person name="Sonoda Y."/>
            <person name="Ikeda A."/>
            <person name="von Wiren N."/>
            <person name="Hayakawa T."/>
            <person name="Yamaguchi J."/>
            <person name="Yamaya T."/>
        </authorList>
    </citation>
    <scope>FUNCTION</scope>
</reference>
<reference key="7">
    <citation type="journal article" date="2003" name="Plant Cell Physiol.">
        <title>Distinct expression and function of three ammonium transporter genes (OsAMT1;1-1;3) in rice.</title>
        <authorList>
            <person name="Sonoda Y."/>
            <person name="Ikeda A."/>
            <person name="Saiki S."/>
            <person name="von Wiren N."/>
            <person name="Yamaya T."/>
            <person name="Yamaguchi J."/>
        </authorList>
    </citation>
    <scope>FUNCTION</scope>
    <scope>TISSUE SPECIFICITY</scope>
    <scope>INDUCTION</scope>
</reference>
<reference key="8">
    <citation type="journal article" date="2003" name="Plant Cell Physiol.">
        <title>Feedback regulation of the ammonium transporter gene family AMT1 by glutamine in rice.</title>
        <authorList>
            <person name="Sonoda Y."/>
            <person name="Ikeda A."/>
            <person name="Saiki S."/>
            <person name="Yamaya T."/>
            <person name="Yamaguchi J."/>
        </authorList>
    </citation>
    <scope>INDUCTION</scope>
</reference>
<keyword id="KW-0924">Ammonia transport</keyword>
<keyword id="KW-0472">Membrane</keyword>
<keyword id="KW-1185">Reference proteome</keyword>
<keyword id="KW-0812">Transmembrane</keyword>
<keyword id="KW-1133">Transmembrane helix</keyword>
<keyword id="KW-0813">Transport</keyword>
<comment type="function">
    <text evidence="3 4">Ammonium transporter probably involved in ammonium uptake from the soil.</text>
</comment>
<comment type="subcellular location">
    <subcellularLocation>
        <location evidence="6">Membrane</location>
        <topology evidence="6">Multi-pass membrane protein</topology>
    </subcellularLocation>
</comment>
<comment type="tissue specificity">
    <text evidence="4">Expressed in roots.</text>
</comment>
<comment type="induction">
    <text evidence="4 5">Down-regulated by ammonium or glutamine supply in roots.</text>
</comment>
<comment type="similarity">
    <text evidence="6">Belongs to the ammonia transporter channel (TC 1.A.11.2) family.</text>
</comment>
<comment type="sequence caution" evidence="6">
    <conflict type="miscellaneous discrepancy">
        <sequence resource="EMBL-CDS" id="AAL05613"/>
    </conflict>
    <text>Sequencing errors.</text>
</comment>
<name>AMT13_ORYSJ</name>